<proteinExistence type="inferred from homology"/>
<feature type="chain" id="PRO_0000040677" description="Outer capsid protein P8">
    <location>
        <begin position="1"/>
        <end position="421"/>
    </location>
</feature>
<feature type="chain" id="PRO_0000040678" description="Outer capsid protein P8'">
    <location>
        <begin position="1"/>
        <end position="362"/>
    </location>
</feature>
<feature type="chain" id="PRO_0000040679" description="Small peptide 1">
    <location>
        <begin position="363"/>
        <end position="421"/>
    </location>
</feature>
<accession>Q85451</accession>
<name>P8_RDVS</name>
<evidence type="ECO:0000250" key="1"/>
<evidence type="ECO:0000305" key="2"/>
<gene>
    <name type="primary">S8</name>
</gene>
<reference key="1">
    <citation type="journal article" date="1993" name="Nihon Shokubutsu Byori Gakkaiho">
        <title>Nucleotide sequence of the outer capsid protein gene of a severe strain of rice dwarf virus.</title>
        <authorList>
            <person name="Omura T."/>
            <person name="Takahashi Y."/>
            <person name="Tomiyama M."/>
            <person name="Kimura I."/>
            <person name="Hibino H."/>
        </authorList>
    </citation>
    <scope>NUCLEOTIDE SEQUENCE [GENOMIC RNA]</scope>
</reference>
<protein>
    <recommendedName>
        <fullName>Outer capsid protein P8</fullName>
    </recommendedName>
    <alternativeName>
        <fullName>Structural protein P8</fullName>
    </alternativeName>
    <component>
        <recommendedName>
            <fullName>Outer capsid protein P8'</fullName>
        </recommendedName>
    </component>
    <component>
        <recommendedName>
            <fullName>Small peptide 1</fullName>
            <shortName>Sp1</shortName>
        </recommendedName>
    </component>
</protein>
<organism>
    <name type="scientific">Rice dwarf virus (isolate S)</name>
    <name type="common">RDV</name>
    <dbReference type="NCBI Taxonomy" id="142806"/>
    <lineage>
        <taxon>Viruses</taxon>
        <taxon>Riboviria</taxon>
        <taxon>Orthornavirae</taxon>
        <taxon>Duplornaviricota</taxon>
        <taxon>Resentoviricetes</taxon>
        <taxon>Reovirales</taxon>
        <taxon>Sedoreoviridae</taxon>
        <taxon>Phytoreovirus</taxon>
        <taxon>Rice dwarf virus</taxon>
    </lineage>
</organism>
<comment type="function">
    <text>Capsid protein which self-assembles to form the outer icosahedral capsid with a T=13 symmetry, about 70 nm in diameter and consisting of 780 molecules capsid proteins.</text>
</comment>
<comment type="subunit">
    <text evidence="1">Homotrimer (By similarity). Homomultimer (By similarity). Interacts with host peroxisomal glycolate oxidase (GOX). This interaction mediates its relocation to virus factories peripheral to host peroxisomes (By similarity).</text>
</comment>
<comment type="subcellular location">
    <molecule>Outer capsid protein P8</molecule>
    <subcellularLocation>
        <location evidence="2">Virion</location>
    </subcellularLocation>
    <subcellularLocation>
        <location evidence="1">Host cytoplasm</location>
    </subcellularLocation>
    <text evidence="1">Found in the peripheral regions of spherical cytoplasmic structures, called virus factories, that appear early after infection and are the site of viral replication and packaging.</text>
</comment>
<comment type="similarity">
    <text evidence="2">Belongs to the phytoreovirus outer capsid protein P8 family.</text>
</comment>
<sequence>MSRQMWLDTSALLEAISEYVVRCNGDTFSGLTTGDFNALSNMFTQLSVSSAGYVSDPRVPLQTMSNMFVSFITSTDRCGYMLRKTWFNSDTKPTVSDDFITTYIRPRLQVPMSDTVRQLNNLSLQPSAKPKLYERQNAIMKGLDIPYSEPIEPCKLFRSVAGQTGNIPMMGILATPPAAQQQPFFVAERRRILFGIRSNAAIPAGAYQFVVPAWASVLSVTGAYVYFTNSFFGTTIAGVTATATAADAATTFTVPTDANNLPVQTDSRLSFSLGGGNINLELGVAKTGFCVAIEGEFTILANRSQAYYTLNSITQTPTSIDDFDVSDFLTTFLSQLRACGQYEIFSDAMDQLTNSLITNYMDPPAIPAGLAFTSPWFRFSERARTILALQNVDLNIRKLIVRHLWVITSLIAVFGRYYRPN</sequence>
<dbReference type="EMBL" id="D13773">
    <property type="protein sequence ID" value="BAA02916.1"/>
    <property type="molecule type" value="Genomic_RNA"/>
</dbReference>
<dbReference type="SMR" id="Q85451"/>
<dbReference type="GO" id="GO:0030430">
    <property type="term" value="C:host cell cytoplasm"/>
    <property type="evidence" value="ECO:0000250"/>
    <property type="project" value="UniProtKB"/>
</dbReference>
<dbReference type="GO" id="GO:0044161">
    <property type="term" value="C:host cell cytoplasmic vesicle"/>
    <property type="evidence" value="ECO:0000250"/>
    <property type="project" value="UniProtKB"/>
</dbReference>
<dbReference type="GO" id="GO:0019031">
    <property type="term" value="C:viral envelope"/>
    <property type="evidence" value="ECO:0007669"/>
    <property type="project" value="InterPro"/>
</dbReference>
<dbReference type="GO" id="GO:0039624">
    <property type="term" value="C:viral outer capsid"/>
    <property type="evidence" value="ECO:0007669"/>
    <property type="project" value="UniProtKB-KW"/>
</dbReference>
<dbReference type="GO" id="GO:0046789">
    <property type="term" value="F:host cell surface receptor binding"/>
    <property type="evidence" value="ECO:0007669"/>
    <property type="project" value="InterPro"/>
</dbReference>
<dbReference type="GO" id="GO:0005198">
    <property type="term" value="F:structural molecule activity"/>
    <property type="evidence" value="ECO:0007669"/>
    <property type="project" value="InterPro"/>
</dbReference>
<dbReference type="GO" id="GO:0019064">
    <property type="term" value="P:fusion of virus membrane with host plasma membrane"/>
    <property type="evidence" value="ECO:0007669"/>
    <property type="project" value="InterPro"/>
</dbReference>
<dbReference type="GO" id="GO:0046718">
    <property type="term" value="P:symbiont entry into host cell"/>
    <property type="evidence" value="ECO:0000250"/>
    <property type="project" value="UniProtKB"/>
</dbReference>
<dbReference type="FunFam" id="2.60.120.170:FF:000002">
    <property type="entry name" value="Outer capsid protein P8"/>
    <property type="match status" value="1"/>
</dbReference>
<dbReference type="Gene3D" id="2.60.120.170">
    <property type="match status" value="1"/>
</dbReference>
<dbReference type="InterPro" id="IPR008980">
    <property type="entry name" value="Capsid_hemagglutn"/>
</dbReference>
<dbReference type="InterPro" id="IPR009807">
    <property type="entry name" value="Phytoreo_P8"/>
</dbReference>
<dbReference type="InterPro" id="IPR008935">
    <property type="entry name" value="Virus_capsid_a-hlx_vir"/>
</dbReference>
<dbReference type="Pfam" id="PF07124">
    <property type="entry name" value="Phytoreo_P8"/>
    <property type="match status" value="1"/>
</dbReference>
<dbReference type="SUPFAM" id="SSF48345">
    <property type="entry name" value="A virus capsid protein alpha-helical domain"/>
    <property type="match status" value="1"/>
</dbReference>
<dbReference type="SUPFAM" id="SSF49818">
    <property type="entry name" value="Viral protein domain"/>
    <property type="match status" value="1"/>
</dbReference>
<organismHost>
    <name type="scientific">Alopecurus aequalis</name>
    <dbReference type="NCBI Taxonomy" id="114194"/>
</organismHost>
<organismHost>
    <name type="scientific">Echinochloa crus-galli</name>
    <name type="common">Barnyard grass</name>
    <name type="synonym">Panicum crus-galli</name>
    <dbReference type="NCBI Taxonomy" id="90397"/>
</organismHost>
<organismHost>
    <name type="scientific">Nephotettix cincticeps</name>
    <name type="common">Green rice leafhopper</name>
    <name type="synonym">Selenocephalus cincticeps</name>
    <dbReference type="NCBI Taxonomy" id="94400"/>
</organismHost>
<organismHost>
    <name type="scientific">Oryza sativa</name>
    <name type="common">Rice</name>
    <dbReference type="NCBI Taxonomy" id="4530"/>
</organismHost>
<organismHost>
    <name type="scientific">Paspalum</name>
    <dbReference type="NCBI Taxonomy" id="147271"/>
</organismHost>
<keyword id="KW-0167">Capsid protein</keyword>
<keyword id="KW-1035">Host cytoplasm</keyword>
<keyword id="KW-0945">Host-virus interaction</keyword>
<keyword id="KW-1152">Outer capsid protein</keyword>
<keyword id="KW-0946">Virion</keyword>